<dbReference type="EC" id="4.1.1.83" evidence="1"/>
<dbReference type="EMBL" id="AM180355">
    <property type="protein sequence ID" value="CAJ66974.1"/>
    <property type="molecule type" value="Genomic_DNA"/>
</dbReference>
<dbReference type="RefSeq" id="WP_003425410.1">
    <property type="nucleotide sequence ID" value="NZ_JAUPES010000004.1"/>
</dbReference>
<dbReference type="RefSeq" id="YP_001086623.1">
    <property type="nucleotide sequence ID" value="NC_009089.1"/>
</dbReference>
<dbReference type="SMR" id="Q18CP4"/>
<dbReference type="STRING" id="272563.CD630_01540"/>
<dbReference type="EnsemblBacteria" id="CAJ66974">
    <property type="protein sequence ID" value="CAJ66974"/>
    <property type="gene ID" value="CD630_01540"/>
</dbReference>
<dbReference type="GeneID" id="66352701"/>
<dbReference type="KEGG" id="cdf:CD630_01540"/>
<dbReference type="KEGG" id="pdc:CDIF630_00273"/>
<dbReference type="PATRIC" id="fig|272563.120.peg.167"/>
<dbReference type="eggNOG" id="ENOG5033E53">
    <property type="taxonomic scope" value="Bacteria"/>
</dbReference>
<dbReference type="OrthoDB" id="3186521at2"/>
<dbReference type="BioCyc" id="PDIF272563:G12WB-258-MONOMER"/>
<dbReference type="Proteomes" id="UP000001978">
    <property type="component" value="Chromosome"/>
</dbReference>
<dbReference type="GO" id="GO:0051539">
    <property type="term" value="F:4 iron, 4 sulfur cluster binding"/>
    <property type="evidence" value="ECO:0007669"/>
    <property type="project" value="UniProtKB-KW"/>
</dbReference>
<dbReference type="GO" id="GO:0043722">
    <property type="term" value="F:4-hydroxyphenylacetate decarboxylase activity"/>
    <property type="evidence" value="ECO:0007669"/>
    <property type="project" value="UniProtKB-EC"/>
</dbReference>
<dbReference type="GO" id="GO:0046872">
    <property type="term" value="F:metal ion binding"/>
    <property type="evidence" value="ECO:0007669"/>
    <property type="project" value="UniProtKB-KW"/>
</dbReference>
<dbReference type="Gene3D" id="2.20.70.100">
    <property type="match status" value="2"/>
</dbReference>
<dbReference type="InterPro" id="IPR041125">
    <property type="entry name" value="4HPAD_g_N"/>
</dbReference>
<dbReference type="InterPro" id="IPR053727">
    <property type="entry name" value="HPA_decarboxylase_ss_sf"/>
</dbReference>
<dbReference type="InterPro" id="IPR040923">
    <property type="entry name" value="HpdC_C"/>
</dbReference>
<dbReference type="NCBIfam" id="NF033716">
    <property type="entry name" value="glycyl_HPDL_Sma"/>
    <property type="match status" value="1"/>
</dbReference>
<dbReference type="Pfam" id="PF18671">
    <property type="entry name" value="4HPAD_g_N"/>
    <property type="match status" value="1"/>
</dbReference>
<dbReference type="Pfam" id="PF18524">
    <property type="entry name" value="HPIP_like"/>
    <property type="match status" value="1"/>
</dbReference>
<keyword id="KW-0004">4Fe-4S</keyword>
<keyword id="KW-0408">Iron</keyword>
<keyword id="KW-0411">Iron-sulfur</keyword>
<keyword id="KW-0456">Lyase</keyword>
<keyword id="KW-0479">Metal-binding</keyword>
<keyword id="KW-1185">Reference proteome</keyword>
<comment type="function">
    <text evidence="1 2">Component of the HPA decarboxylase that decarboxylates phenylacetates with a hydroxyl group in the p-position. Active toward 4-hydroxyphenylacetate and 3,4-dihydroxyphenylacetate, forming 4-methylphenol and 4-methylcatechol, respectively. Is likely involved in the catabolism of aromatic amino acids such as tyrosine fermentation. 4-methylphenol (p-cresol) formation provides metabolic toxicity, which allows an active suppression of other microbes and may provide growth advantages for the producers in highly competitive environments (By similarity). The small subunit is essential for enzymatic activity of HPA decarboxylase, and also seems to be involved in the regulation of the enzyme oligomeric state and catalytic activity (By similarity).</text>
</comment>
<comment type="catalytic activity">
    <reaction evidence="1">
        <text>4-hydroxyphenylacetate + H(+) = 4-methylphenol + CO2</text>
        <dbReference type="Rhea" id="RHEA:22732"/>
        <dbReference type="ChEBI" id="CHEBI:15378"/>
        <dbReference type="ChEBI" id="CHEBI:16526"/>
        <dbReference type="ChEBI" id="CHEBI:17847"/>
        <dbReference type="ChEBI" id="CHEBI:48999"/>
        <dbReference type="EC" id="4.1.1.83"/>
    </reaction>
    <physiologicalReaction direction="left-to-right" evidence="1">
        <dbReference type="Rhea" id="RHEA:22733"/>
    </physiologicalReaction>
</comment>
<comment type="catalytic activity">
    <reaction evidence="1">
        <text>3,4-dihydroxyphenylacetate + H(+) = 4-methylcatechol + CO2</text>
        <dbReference type="Rhea" id="RHEA:62556"/>
        <dbReference type="ChEBI" id="CHEBI:15378"/>
        <dbReference type="ChEBI" id="CHEBI:16526"/>
        <dbReference type="ChEBI" id="CHEBI:17254"/>
        <dbReference type="ChEBI" id="CHEBI:17612"/>
        <dbReference type="EC" id="4.1.1.83"/>
    </reaction>
    <physiologicalReaction direction="left-to-right" evidence="1">
        <dbReference type="Rhea" id="RHEA:62557"/>
    </physiologicalReaction>
</comment>
<comment type="cofactor">
    <cofactor evidence="1">
        <name>[4Fe-4S] cluster</name>
        <dbReference type="ChEBI" id="CHEBI:49883"/>
    </cofactor>
    <text evidence="1">Binds 2 [4Fe-4S] clusters per subunit.</text>
</comment>
<comment type="subunit">
    <text evidence="1">Heterooctamer consisting of 4 large (HpdB) subunits and 4 small (HpdC) subunits, arranged as a tetramer of heterodimers.</text>
</comment>
<comment type="similarity">
    <text evidence="3">Belongs to the HPA decarboxylase small subunit family.</text>
</comment>
<feature type="chain" id="PRO_0000403692" description="4-hydroxyphenylacetate decarboxylase small subunit">
    <location>
        <begin position="1"/>
        <end position="85"/>
    </location>
</feature>
<feature type="binding site" evidence="1">
    <location>
        <position position="4"/>
    </location>
    <ligand>
        <name>[4Fe-4S] cluster</name>
        <dbReference type="ChEBI" id="CHEBI:49883"/>
        <label>1</label>
    </ligand>
</feature>
<feature type="binding site" evidence="1">
    <location>
        <position position="7"/>
    </location>
    <ligand>
        <name>[4Fe-4S] cluster</name>
        <dbReference type="ChEBI" id="CHEBI:49883"/>
        <label>1</label>
    </ligand>
</feature>
<feature type="binding site" evidence="1">
    <location>
        <position position="20"/>
    </location>
    <ligand>
        <name>[4Fe-4S] cluster</name>
        <dbReference type="ChEBI" id="CHEBI:49883"/>
        <label>1</label>
    </ligand>
</feature>
<feature type="binding site" evidence="1">
    <location>
        <position position="34"/>
    </location>
    <ligand>
        <name>[4Fe-4S] cluster</name>
        <dbReference type="ChEBI" id="CHEBI:49883"/>
        <label>1</label>
    </ligand>
</feature>
<feature type="binding site" evidence="1">
    <location>
        <position position="43"/>
    </location>
    <ligand>
        <name>[4Fe-4S] cluster</name>
        <dbReference type="ChEBI" id="CHEBI:49883"/>
        <label>2</label>
    </ligand>
</feature>
<feature type="binding site" evidence="1">
    <location>
        <position position="46"/>
    </location>
    <ligand>
        <name>[4Fe-4S] cluster</name>
        <dbReference type="ChEBI" id="CHEBI:49883"/>
        <label>2</label>
    </ligand>
</feature>
<feature type="binding site" evidence="1">
    <location>
        <position position="60"/>
    </location>
    <ligand>
        <name>[4Fe-4S] cluster</name>
        <dbReference type="ChEBI" id="CHEBI:49883"/>
        <label>2</label>
    </ligand>
</feature>
<feature type="binding site" evidence="1">
    <location>
        <position position="78"/>
    </location>
    <ligand>
        <name>[4Fe-4S] cluster</name>
        <dbReference type="ChEBI" id="CHEBI:49883"/>
        <label>2</label>
    </ligand>
</feature>
<accession>Q18CP4</accession>
<reference key="1">
    <citation type="journal article" date="2006" name="Nat. Genet.">
        <title>The multidrug-resistant human pathogen Clostridium difficile has a highly mobile, mosaic genome.</title>
        <authorList>
            <person name="Sebaihia M."/>
            <person name="Wren B.W."/>
            <person name="Mullany P."/>
            <person name="Fairweather N.F."/>
            <person name="Minton N."/>
            <person name="Stabler R."/>
            <person name="Thomson N.R."/>
            <person name="Roberts A.P."/>
            <person name="Cerdeno-Tarraga A.M."/>
            <person name="Wang H."/>
            <person name="Holden M.T.G."/>
            <person name="Wright A."/>
            <person name="Churcher C."/>
            <person name="Quail M.A."/>
            <person name="Baker S."/>
            <person name="Bason N."/>
            <person name="Brooks K."/>
            <person name="Chillingworth T."/>
            <person name="Cronin A."/>
            <person name="Davis P."/>
            <person name="Dowd L."/>
            <person name="Fraser A."/>
            <person name="Feltwell T."/>
            <person name="Hance Z."/>
            <person name="Holroyd S."/>
            <person name="Jagels K."/>
            <person name="Moule S."/>
            <person name="Mungall K."/>
            <person name="Price C."/>
            <person name="Rabbinowitsch E."/>
            <person name="Sharp S."/>
            <person name="Simmonds M."/>
            <person name="Stevens K."/>
            <person name="Unwin L."/>
            <person name="Whithead S."/>
            <person name="Dupuy B."/>
            <person name="Dougan G."/>
            <person name="Barrell B."/>
            <person name="Parkhill J."/>
        </authorList>
    </citation>
    <scope>NUCLEOTIDE SEQUENCE [LARGE SCALE GENOMIC DNA]</scope>
    <source>
        <strain>630</strain>
    </source>
</reference>
<name>HPDS_CLOD6</name>
<protein>
    <recommendedName>
        <fullName evidence="1">4-hydroxyphenylacetate decarboxylase small subunit</fullName>
        <shortName evidence="1">HPA decarboxylase small subunit</shortName>
        <ecNumber evidence="1">4.1.1.83</ecNumber>
    </recommendedName>
    <alternativeName>
        <fullName evidence="1">4-hydroxyphenylacetate decarboxylase gamma subunit</fullName>
    </alternativeName>
    <alternativeName>
        <fullName evidence="1">p-hydroxyphenylacetate decarboxylase small subunit</fullName>
    </alternativeName>
</protein>
<proteinExistence type="inferred from homology"/>
<organism>
    <name type="scientific">Clostridioides difficile (strain 630)</name>
    <name type="common">Peptoclostridium difficile</name>
    <dbReference type="NCBI Taxonomy" id="272563"/>
    <lineage>
        <taxon>Bacteria</taxon>
        <taxon>Bacillati</taxon>
        <taxon>Bacillota</taxon>
        <taxon>Clostridia</taxon>
        <taxon>Peptostreptococcales</taxon>
        <taxon>Peptostreptococcaceae</taxon>
        <taxon>Clostridioides</taxon>
    </lineage>
</organism>
<evidence type="ECO:0000250" key="1">
    <source>
        <dbReference type="UniProtKB" id="Q38HX3"/>
    </source>
</evidence>
<evidence type="ECO:0000250" key="2">
    <source>
        <dbReference type="UniProtKB" id="Q84F15"/>
    </source>
</evidence>
<evidence type="ECO:0000305" key="3"/>
<evidence type="ECO:0000312" key="4">
    <source>
        <dbReference type="EMBL" id="CAJ66974.1"/>
    </source>
</evidence>
<sequence>MRKHSDCMNFCAVDATKGICRLSKQMINLDDAACPEIKVMPKCKNCKNFVEANDEGIGKCVGLEKEDWVYSTLNAITCEGHVFNE</sequence>
<gene>
    <name evidence="4" type="primary">hpdC</name>
    <name type="ordered locus">CD630_01540</name>
</gene>